<protein>
    <recommendedName>
        <fullName>Probable RNA methyltransferase azo0122</fullName>
        <ecNumber>2.1.1.-</ecNumber>
    </recommendedName>
</protein>
<proteinExistence type="inferred from homology"/>
<evidence type="ECO:0000250" key="1"/>
<evidence type="ECO:0000255" key="2"/>
<evidence type="ECO:0000255" key="3">
    <source>
        <dbReference type="PROSITE-ProRule" id="PRU01266"/>
    </source>
</evidence>
<evidence type="ECO:0000305" key="4"/>
<comment type="cofactor">
    <cofactor evidence="1">
        <name>[4Fe-4S] cluster</name>
        <dbReference type="ChEBI" id="CHEBI:49883"/>
    </cofactor>
    <text evidence="1">Binds 1 [4Fe-4S] cluster. The cluster is coordinated with 3 cysteines and an exchangeable S-adenosyl-L-methionine.</text>
</comment>
<comment type="subcellular location">
    <subcellularLocation>
        <location evidence="4">Cytoplasm</location>
    </subcellularLocation>
</comment>
<comment type="similarity">
    <text evidence="4">Belongs to the radical SAM superfamily. RlmN family.</text>
</comment>
<comment type="sequence caution" evidence="4">
    <conflict type="erroneous initiation">
        <sequence resource="EMBL-CDS" id="CAL92740"/>
    </conflict>
</comment>
<sequence length="347" mass="38216">MRIDDLTQRLRALGAKPAHEQRVLRAWVQRSSMDNRRQAAKDFLPLALREALPALTAELEGLARLRSQHPGEDGSARLLVELADGQTVESVLLLRDGLCVSTQLGCAVGCVFCMTGREGLLRQLGSAEIVAQVVLARSLRPVKKVVFMGMGEPAHNLDNVLEAIDLLGTAGGIGHKNLVFSTVGDYRVFERLPRQRVKPALALSLHTTRADLRAQLLPRAPQIAPQELVELGERYARSTGYPIQYQWTLIEGVNDSPEEMDGIVRLLRGKYALMNLIPYNSVPELEFRRPGREAAVALAAYLHRHGVLAKLRQSAGQDVEGGCGQLRARVVKMDRRPRTARATPPTA</sequence>
<dbReference type="EC" id="2.1.1.-"/>
<dbReference type="EMBL" id="AM406670">
    <property type="protein sequence ID" value="CAL92740.1"/>
    <property type="status" value="ALT_INIT"/>
    <property type="molecule type" value="Genomic_DNA"/>
</dbReference>
<dbReference type="RefSeq" id="WP_041642161.1">
    <property type="nucleotide sequence ID" value="NC_008702.1"/>
</dbReference>
<dbReference type="SMR" id="A1K1N5"/>
<dbReference type="STRING" id="62928.azo0122"/>
<dbReference type="KEGG" id="azo:azo0122"/>
<dbReference type="eggNOG" id="COG0820">
    <property type="taxonomic scope" value="Bacteria"/>
</dbReference>
<dbReference type="HOGENOM" id="CLU_029101_3_3_4"/>
<dbReference type="Proteomes" id="UP000002588">
    <property type="component" value="Chromosome"/>
</dbReference>
<dbReference type="GO" id="GO:0005737">
    <property type="term" value="C:cytoplasm"/>
    <property type="evidence" value="ECO:0007669"/>
    <property type="project" value="UniProtKB-SubCell"/>
</dbReference>
<dbReference type="GO" id="GO:0051539">
    <property type="term" value="F:4 iron, 4 sulfur cluster binding"/>
    <property type="evidence" value="ECO:0007669"/>
    <property type="project" value="UniProtKB-KW"/>
</dbReference>
<dbReference type="GO" id="GO:0046872">
    <property type="term" value="F:metal ion binding"/>
    <property type="evidence" value="ECO:0007669"/>
    <property type="project" value="UniProtKB-KW"/>
</dbReference>
<dbReference type="GO" id="GO:0008173">
    <property type="term" value="F:RNA methyltransferase activity"/>
    <property type="evidence" value="ECO:0007669"/>
    <property type="project" value="InterPro"/>
</dbReference>
<dbReference type="GO" id="GO:0070475">
    <property type="term" value="P:rRNA base methylation"/>
    <property type="evidence" value="ECO:0007669"/>
    <property type="project" value="TreeGrafter"/>
</dbReference>
<dbReference type="GO" id="GO:0030488">
    <property type="term" value="P:tRNA methylation"/>
    <property type="evidence" value="ECO:0007669"/>
    <property type="project" value="TreeGrafter"/>
</dbReference>
<dbReference type="Gene3D" id="3.20.20.70">
    <property type="entry name" value="Aldolase class I"/>
    <property type="match status" value="1"/>
</dbReference>
<dbReference type="InterPro" id="IPR013785">
    <property type="entry name" value="Aldolase_TIM"/>
</dbReference>
<dbReference type="InterPro" id="IPR040072">
    <property type="entry name" value="Methyltransferase_A"/>
</dbReference>
<dbReference type="InterPro" id="IPR004383">
    <property type="entry name" value="rRNA_lsu_MTrfase_RlmN/Cfr"/>
</dbReference>
<dbReference type="InterPro" id="IPR007197">
    <property type="entry name" value="rSAM"/>
</dbReference>
<dbReference type="NCBIfam" id="NF011034">
    <property type="entry name" value="PRK14464.1"/>
    <property type="match status" value="1"/>
</dbReference>
<dbReference type="PANTHER" id="PTHR30544">
    <property type="entry name" value="23S RRNA METHYLTRANSFERASE"/>
    <property type="match status" value="1"/>
</dbReference>
<dbReference type="PANTHER" id="PTHR30544:SF5">
    <property type="entry name" value="RADICAL SAM CORE DOMAIN-CONTAINING PROTEIN"/>
    <property type="match status" value="1"/>
</dbReference>
<dbReference type="Pfam" id="PF04055">
    <property type="entry name" value="Radical_SAM"/>
    <property type="match status" value="1"/>
</dbReference>
<dbReference type="PIRSF" id="PIRSF006004">
    <property type="entry name" value="CHP00048"/>
    <property type="match status" value="1"/>
</dbReference>
<dbReference type="SFLD" id="SFLDF00275">
    <property type="entry name" value="adenosine_C2_methyltransferase"/>
    <property type="match status" value="1"/>
</dbReference>
<dbReference type="SFLD" id="SFLDG01062">
    <property type="entry name" value="methyltransferase_(Class_A)"/>
    <property type="match status" value="1"/>
</dbReference>
<dbReference type="SUPFAM" id="SSF102114">
    <property type="entry name" value="Radical SAM enzymes"/>
    <property type="match status" value="1"/>
</dbReference>
<dbReference type="PROSITE" id="PS51918">
    <property type="entry name" value="RADICAL_SAM"/>
    <property type="match status" value="1"/>
</dbReference>
<keyword id="KW-0004">4Fe-4S</keyword>
<keyword id="KW-0963">Cytoplasm</keyword>
<keyword id="KW-1015">Disulfide bond</keyword>
<keyword id="KW-0408">Iron</keyword>
<keyword id="KW-0411">Iron-sulfur</keyword>
<keyword id="KW-0479">Metal-binding</keyword>
<keyword id="KW-0489">Methyltransferase</keyword>
<keyword id="KW-1185">Reference proteome</keyword>
<keyword id="KW-0949">S-adenosyl-L-methionine</keyword>
<keyword id="KW-0808">Transferase</keyword>
<feature type="chain" id="PRO_0000350020" description="Probable RNA methyltransferase azo0122">
    <location>
        <begin position="1"/>
        <end position="347"/>
    </location>
</feature>
<feature type="domain" description="Radical SAM core" evidence="3">
    <location>
        <begin position="92"/>
        <end position="318"/>
    </location>
</feature>
<feature type="active site" description="Proton acceptor" evidence="2">
    <location>
        <position position="89"/>
    </location>
</feature>
<feature type="active site" description="S-methylcysteine intermediate" evidence="1">
    <location>
        <position position="323"/>
    </location>
</feature>
<feature type="binding site" evidence="1">
    <location>
        <position position="106"/>
    </location>
    <ligand>
        <name>[4Fe-4S] cluster</name>
        <dbReference type="ChEBI" id="CHEBI:49883"/>
        <note>4Fe-4S-S-AdoMet</note>
    </ligand>
</feature>
<feature type="binding site" evidence="1">
    <location>
        <position position="110"/>
    </location>
    <ligand>
        <name>[4Fe-4S] cluster</name>
        <dbReference type="ChEBI" id="CHEBI:49883"/>
        <note>4Fe-4S-S-AdoMet</note>
    </ligand>
</feature>
<feature type="binding site" evidence="1">
    <location>
        <position position="113"/>
    </location>
    <ligand>
        <name>[4Fe-4S] cluster</name>
        <dbReference type="ChEBI" id="CHEBI:49883"/>
        <note>4Fe-4S-S-AdoMet</note>
    </ligand>
</feature>
<feature type="binding site" evidence="1">
    <location>
        <begin position="151"/>
        <end position="152"/>
    </location>
    <ligand>
        <name>S-adenosyl-L-methionine</name>
        <dbReference type="ChEBI" id="CHEBI:59789"/>
    </ligand>
</feature>
<feature type="binding site" evidence="1">
    <location>
        <position position="181"/>
    </location>
    <ligand>
        <name>S-adenosyl-L-methionine</name>
        <dbReference type="ChEBI" id="CHEBI:59789"/>
    </ligand>
</feature>
<feature type="binding site" evidence="1">
    <location>
        <begin position="204"/>
        <end position="206"/>
    </location>
    <ligand>
        <name>S-adenosyl-L-methionine</name>
        <dbReference type="ChEBI" id="CHEBI:59789"/>
    </ligand>
</feature>
<feature type="binding site" evidence="1">
    <location>
        <position position="280"/>
    </location>
    <ligand>
        <name>S-adenosyl-L-methionine</name>
        <dbReference type="ChEBI" id="CHEBI:59789"/>
    </ligand>
</feature>
<feature type="disulfide bond" description="(transient)" evidence="1">
    <location>
        <begin position="99"/>
        <end position="323"/>
    </location>
</feature>
<accession>A1K1N5</accession>
<name>Y122_AZOSB</name>
<organism>
    <name type="scientific">Azoarcus sp. (strain BH72)</name>
    <dbReference type="NCBI Taxonomy" id="418699"/>
    <lineage>
        <taxon>Bacteria</taxon>
        <taxon>Pseudomonadati</taxon>
        <taxon>Pseudomonadota</taxon>
        <taxon>Betaproteobacteria</taxon>
        <taxon>Rhodocyclales</taxon>
        <taxon>Zoogloeaceae</taxon>
        <taxon>Azoarcus</taxon>
    </lineage>
</organism>
<gene>
    <name type="ordered locus">azo0122</name>
</gene>
<reference key="1">
    <citation type="journal article" date="2006" name="Nat. Biotechnol.">
        <title>Complete genome of the mutualistic, N2-fixing grass endophyte Azoarcus sp. strain BH72.</title>
        <authorList>
            <person name="Krause A."/>
            <person name="Ramakumar A."/>
            <person name="Bartels D."/>
            <person name="Battistoni F."/>
            <person name="Bekel T."/>
            <person name="Boch J."/>
            <person name="Boehm M."/>
            <person name="Friedrich F."/>
            <person name="Hurek T."/>
            <person name="Krause L."/>
            <person name="Linke B."/>
            <person name="McHardy A.C."/>
            <person name="Sarkar A."/>
            <person name="Schneiker S."/>
            <person name="Syed A.A."/>
            <person name="Thauer R."/>
            <person name="Vorhoelter F.-J."/>
            <person name="Weidner S."/>
            <person name="Puehler A."/>
            <person name="Reinhold-Hurek B."/>
            <person name="Kaiser O."/>
            <person name="Goesmann A."/>
        </authorList>
    </citation>
    <scope>NUCLEOTIDE SEQUENCE [LARGE SCALE GENOMIC DNA]</scope>
    <source>
        <strain>BH72</strain>
    </source>
</reference>